<evidence type="ECO:0000255" key="1"/>
<evidence type="ECO:0000255" key="2">
    <source>
        <dbReference type="PROSITE-ProRule" id="PRU00521"/>
    </source>
</evidence>
<evidence type="ECO:0000269" key="3">
    <source>
    </source>
</evidence>
<evidence type="ECO:0000269" key="4">
    <source>
    </source>
</evidence>
<evidence type="ECO:0000305" key="5"/>
<dbReference type="EMBL" id="AC087498">
    <property type="status" value="NOT_ANNOTATED_CDS"/>
    <property type="molecule type" value="Genomic_DNA"/>
</dbReference>
<dbReference type="EMBL" id="BC136874">
    <property type="status" value="NOT_ANNOTATED_CDS"/>
    <property type="molecule type" value="mRNA"/>
</dbReference>
<dbReference type="EMBL" id="U04680">
    <property type="protein sequence ID" value="AAA18344.1"/>
    <property type="molecule type" value="Genomic_DNA"/>
</dbReference>
<dbReference type="EMBL" id="AF399621">
    <property type="protein sequence ID" value="AAK95106.1"/>
    <property type="molecule type" value="Genomic_DNA"/>
</dbReference>
<dbReference type="PIR" id="I38472">
    <property type="entry name" value="I38472"/>
</dbReference>
<dbReference type="SMR" id="P47883"/>
<dbReference type="FunCoup" id="P47883">
    <property type="interactions" value="259"/>
</dbReference>
<dbReference type="GlyCosmos" id="P47883">
    <property type="glycosylation" value="1 site, No reported glycans"/>
</dbReference>
<dbReference type="GlyGen" id="P47883">
    <property type="glycosylation" value="1 site"/>
</dbReference>
<dbReference type="BioMuta" id="HGNC:15510"/>
<dbReference type="DMDM" id="269849760"/>
<dbReference type="ProteomicsDB" id="55809"/>
<dbReference type="AGR" id="HGNC:15510"/>
<dbReference type="GeneCards" id="OR3A4P"/>
<dbReference type="HGNC" id="HGNC:15510">
    <property type="gene designation" value="OR3A4P"/>
</dbReference>
<dbReference type="neXtProt" id="NX_P47883"/>
<dbReference type="InParanoid" id="P47883"/>
<dbReference type="PAN-GO" id="P47883">
    <property type="GO annotations" value="3 GO annotations based on evolutionary models"/>
</dbReference>
<dbReference type="PhylomeDB" id="P47883"/>
<dbReference type="PathwayCommons" id="P47883"/>
<dbReference type="Pharos" id="P47883">
    <property type="development level" value="Tdark"/>
</dbReference>
<dbReference type="PRO" id="PR:P47883"/>
<dbReference type="Proteomes" id="UP000005640">
    <property type="component" value="Unplaced"/>
</dbReference>
<dbReference type="RNAct" id="P47883">
    <property type="molecule type" value="protein"/>
</dbReference>
<dbReference type="GO" id="GO:0016020">
    <property type="term" value="C:membrane"/>
    <property type="evidence" value="ECO:0000303"/>
    <property type="project" value="UniProtKB"/>
</dbReference>
<dbReference type="GO" id="GO:0005886">
    <property type="term" value="C:plasma membrane"/>
    <property type="evidence" value="ECO:0000318"/>
    <property type="project" value="GO_Central"/>
</dbReference>
<dbReference type="GO" id="GO:0004930">
    <property type="term" value="F:G protein-coupled receptor activity"/>
    <property type="evidence" value="ECO:0007669"/>
    <property type="project" value="UniProtKB-KW"/>
</dbReference>
<dbReference type="GO" id="GO:0004984">
    <property type="term" value="F:olfactory receptor activity"/>
    <property type="evidence" value="ECO:0000318"/>
    <property type="project" value="GO_Central"/>
</dbReference>
<dbReference type="GO" id="GO:0007608">
    <property type="term" value="P:sensory perception of smell"/>
    <property type="evidence" value="ECO:0000303"/>
    <property type="project" value="UniProtKB"/>
</dbReference>
<dbReference type="GO" id="GO:0007165">
    <property type="term" value="P:signal transduction"/>
    <property type="evidence" value="ECO:0000318"/>
    <property type="project" value="GO_Central"/>
</dbReference>
<dbReference type="CDD" id="cd15233">
    <property type="entry name" value="7tmA_OR3A-like"/>
    <property type="match status" value="1"/>
</dbReference>
<dbReference type="FunFam" id="1.20.1070.10:FF:000010">
    <property type="entry name" value="Olfactory receptor"/>
    <property type="match status" value="1"/>
</dbReference>
<dbReference type="Gene3D" id="1.20.1070.10">
    <property type="entry name" value="Rhodopsin 7-helix transmembrane proteins"/>
    <property type="match status" value="1"/>
</dbReference>
<dbReference type="InterPro" id="IPR000276">
    <property type="entry name" value="GPCR_Rhodpsn"/>
</dbReference>
<dbReference type="InterPro" id="IPR017452">
    <property type="entry name" value="GPCR_Rhodpsn_7TM"/>
</dbReference>
<dbReference type="InterPro" id="IPR000725">
    <property type="entry name" value="Olfact_rcpt"/>
</dbReference>
<dbReference type="PANTHER" id="PTHR48001">
    <property type="entry name" value="OLFACTORY RECEPTOR"/>
    <property type="match status" value="1"/>
</dbReference>
<dbReference type="Pfam" id="PF13853">
    <property type="entry name" value="7tm_4"/>
    <property type="match status" value="1"/>
</dbReference>
<dbReference type="PRINTS" id="PR00237">
    <property type="entry name" value="GPCRRHODOPSN"/>
</dbReference>
<dbReference type="PRINTS" id="PR00245">
    <property type="entry name" value="OLFACTORYR"/>
</dbReference>
<dbReference type="SUPFAM" id="SSF81321">
    <property type="entry name" value="Family A G protein-coupled receptor-like"/>
    <property type="match status" value="1"/>
</dbReference>
<dbReference type="PROSITE" id="PS00237">
    <property type="entry name" value="G_PROTEIN_RECEP_F1_1"/>
    <property type="match status" value="1"/>
</dbReference>
<dbReference type="PROSITE" id="PS50262">
    <property type="entry name" value="G_PROTEIN_RECEP_F1_2"/>
    <property type="match status" value="1"/>
</dbReference>
<sequence length="348" mass="37194">MDLGNSGNDSVVTKFVLLGLTETAALQPILFVIFLLAYVTTIGGTLSILAAILMETKLHSPMYFFLGNLSLPDVGCVSVTVPAMLSHFISNDRSIPYKACLSELFFFHLLAGADCFLLTIMAYDRYLAICQSLTYSSRMSWGIQQALVGMSCVFSFTNALTQTVALSPLNFCGPNVINHFYCDLPQPFQLSCSSVHLNGQLLFVAAAFMGVAPLVLITVSYAHVAAAVLRIRSAEGRKKAFSTCSSHLTVVGIFYGTGVFSYTRLGSVESSDKDKGIGILNTVISPMLNPLIYWTSLLDVGCISHCSSDAGVSPGPPVQSSLCCLQFTALLSPPPGWGGLSPLNSHGL</sequence>
<gene>
    <name type="primary">OR3A4P</name>
    <name type="synonym">OR3A4</name>
    <name type="synonym">OR3A5P</name>
</gene>
<comment type="function">
    <text evidence="5">Odorant receptor.</text>
</comment>
<comment type="subcellular location">
    <subcellularLocation>
        <location>Cell membrane</location>
        <topology>Multi-pass membrane protein</topology>
    </subcellularLocation>
</comment>
<comment type="similarity">
    <text evidence="2">Belongs to the G-protein coupled receptor 1 family.</text>
</comment>
<comment type="caution">
    <text evidence="5">Could be the product of a pseudogene.</text>
</comment>
<comment type="online information" name="Human Olfactory Receptor Data Exploratorium (HORDE)">
    <link uri="http://genome.weizmann.ac.il/horde/card/index/symbol:OR3A4"/>
</comment>
<feature type="chain" id="PRO_0000150522" description="Putative olfactory receptor 3A4">
    <location>
        <begin position="1"/>
        <end position="348"/>
    </location>
</feature>
<feature type="topological domain" description="Extracellular" evidence="1">
    <location>
        <begin position="1"/>
        <end position="28"/>
    </location>
</feature>
<feature type="transmembrane region" description="Helical; Name=1" evidence="1">
    <location>
        <begin position="29"/>
        <end position="52"/>
    </location>
</feature>
<feature type="topological domain" description="Cytoplasmic" evidence="1">
    <location>
        <begin position="53"/>
        <end position="60"/>
    </location>
</feature>
<feature type="transmembrane region" description="Helical; Name=2" evidence="1">
    <location>
        <begin position="61"/>
        <end position="82"/>
    </location>
</feature>
<feature type="topological domain" description="Extracellular" evidence="1">
    <location>
        <begin position="83"/>
        <end position="103"/>
    </location>
</feature>
<feature type="transmembrane region" description="Helical; Name=3" evidence="1">
    <location>
        <begin position="104"/>
        <end position="123"/>
    </location>
</feature>
<feature type="topological domain" description="Cytoplasmic" evidence="1">
    <location>
        <begin position="124"/>
        <end position="143"/>
    </location>
</feature>
<feature type="transmembrane region" description="Helical; Name=4" evidence="1">
    <location>
        <begin position="144"/>
        <end position="161"/>
    </location>
</feature>
<feature type="topological domain" description="Extracellular" evidence="1">
    <location>
        <begin position="162"/>
        <end position="199"/>
    </location>
</feature>
<feature type="transmembrane region" description="Helical; Name=5" evidence="1">
    <location>
        <begin position="200"/>
        <end position="222"/>
    </location>
</feature>
<feature type="topological domain" description="Cytoplasmic" evidence="1">
    <location>
        <begin position="223"/>
        <end position="239"/>
    </location>
</feature>
<feature type="transmembrane region" description="Helical; Name=6" evidence="1">
    <location>
        <begin position="240"/>
        <end position="262"/>
    </location>
</feature>
<feature type="topological domain" description="Extracellular" evidence="1">
    <location>
        <begin position="263"/>
        <end position="275"/>
    </location>
</feature>
<feature type="transmembrane region" description="Helical; Name=7" evidence="1">
    <location>
        <begin position="276"/>
        <end position="295"/>
    </location>
</feature>
<feature type="topological domain" description="Cytoplasmic" evidence="1">
    <location>
        <begin position="296"/>
        <end position="348"/>
    </location>
</feature>
<feature type="glycosylation site" description="N-linked (GlcNAc...) asparagine" evidence="1">
    <location>
        <position position="8"/>
    </location>
</feature>
<feature type="disulfide bond" evidence="2">
    <location>
        <begin position="100"/>
        <end position="192"/>
    </location>
</feature>
<feature type="sequence variant" id="VAR_060594" description="In dbSNP:rs9905684.">
    <original>I</original>
    <variation>V</variation>
    <location>
        <position position="42"/>
    </location>
</feature>
<feature type="sequence variant" id="VAR_060595" description="In dbSNP:rs9905086.">
    <original>S</original>
    <variation>R</variation>
    <location>
        <position position="86"/>
    </location>
</feature>
<feature type="sequence variant" id="VAR_060596" description="In dbSNP:rs9903671.">
    <original>E</original>
    <variation>Q</variation>
    <location>
        <position position="103"/>
    </location>
</feature>
<feature type="sequence variant" id="VAR_060597" description="In dbSNP:rs9906179.">
    <original>I</original>
    <variation>V</variation>
    <location>
        <position position="120"/>
    </location>
</feature>
<feature type="sequence variant" id="VAR_060598" description="In dbSNP:rs9911226.">
    <original>P</original>
    <variation>T</variation>
    <location>
        <position position="168"/>
    </location>
</feature>
<feature type="sequence variant" id="VAR_060599" description="In dbSNP:rs9912090.">
    <original>N</original>
    <variation>S</variation>
    <location>
        <position position="175"/>
    </location>
</feature>
<feature type="sequence variant" id="VAR_060600" description="In dbSNP:rs2855677.">
    <original>Y</original>
    <variation>H</variation>
    <location>
        <position position="181"/>
    </location>
</feature>
<feature type="sequence variant" id="VAR_060601" description="In dbSNP:rs231678." evidence="3 4">
    <original>S</original>
    <variation>A</variation>
    <location>
        <position position="193"/>
    </location>
</feature>
<feature type="sequence variant" id="VAR_060602" description="In dbSNP:rs231677." evidence="3 4">
    <original>R</original>
    <variation>K</variation>
    <location>
        <position position="237"/>
    </location>
</feature>
<feature type="sequence variant" id="VAR_060603" description="In dbSNP:rs8076130.">
    <original>V</original>
    <variation>I</variation>
    <location>
        <position position="300"/>
    </location>
</feature>
<accession>P47883</accession>
<accession>Q96R24</accession>
<keyword id="KW-1003">Cell membrane</keyword>
<keyword id="KW-1015">Disulfide bond</keyword>
<keyword id="KW-0297">G-protein coupled receptor</keyword>
<keyword id="KW-0325">Glycoprotein</keyword>
<keyword id="KW-0472">Membrane</keyword>
<keyword id="KW-0552">Olfaction</keyword>
<keyword id="KW-0675">Receptor</keyword>
<keyword id="KW-1185">Reference proteome</keyword>
<keyword id="KW-0716">Sensory transduction</keyword>
<keyword id="KW-0807">Transducer</keyword>
<keyword id="KW-0812">Transmembrane</keyword>
<keyword id="KW-1133">Transmembrane helix</keyword>
<protein>
    <recommendedName>
        <fullName>Putative olfactory receptor 3A4</fullName>
    </recommendedName>
    <alternativeName>
        <fullName>Olfactory receptor 17-24</fullName>
        <shortName>OR17-24</shortName>
    </alternativeName>
    <alternativeName>
        <fullName>Olfactory receptor 3A5</fullName>
    </alternativeName>
</protein>
<reference key="1">
    <citation type="journal article" date="2006" name="Nature">
        <title>DNA sequence of human chromosome 17 and analysis of rearrangement in the human lineage.</title>
        <authorList>
            <person name="Zody M.C."/>
            <person name="Garber M."/>
            <person name="Adams D.J."/>
            <person name="Sharpe T."/>
            <person name="Harrow J."/>
            <person name="Lupski J.R."/>
            <person name="Nicholson C."/>
            <person name="Searle S.M."/>
            <person name="Wilming L."/>
            <person name="Young S.K."/>
            <person name="Abouelleil A."/>
            <person name="Allen N.R."/>
            <person name="Bi W."/>
            <person name="Bloom T."/>
            <person name="Borowsky M.L."/>
            <person name="Bugalter B.E."/>
            <person name="Butler J."/>
            <person name="Chang J.L."/>
            <person name="Chen C.-K."/>
            <person name="Cook A."/>
            <person name="Corum B."/>
            <person name="Cuomo C.A."/>
            <person name="de Jong P.J."/>
            <person name="DeCaprio D."/>
            <person name="Dewar K."/>
            <person name="FitzGerald M."/>
            <person name="Gilbert J."/>
            <person name="Gibson R."/>
            <person name="Gnerre S."/>
            <person name="Goldstein S."/>
            <person name="Grafham D.V."/>
            <person name="Grocock R."/>
            <person name="Hafez N."/>
            <person name="Hagopian D.S."/>
            <person name="Hart E."/>
            <person name="Norman C.H."/>
            <person name="Humphray S."/>
            <person name="Jaffe D.B."/>
            <person name="Jones M."/>
            <person name="Kamal M."/>
            <person name="Khodiyar V.K."/>
            <person name="LaButti K."/>
            <person name="Laird G."/>
            <person name="Lehoczky J."/>
            <person name="Liu X."/>
            <person name="Lokyitsang T."/>
            <person name="Loveland J."/>
            <person name="Lui A."/>
            <person name="Macdonald P."/>
            <person name="Major J.E."/>
            <person name="Matthews L."/>
            <person name="Mauceli E."/>
            <person name="McCarroll S.A."/>
            <person name="Mihalev A.H."/>
            <person name="Mudge J."/>
            <person name="Nguyen C."/>
            <person name="Nicol R."/>
            <person name="O'Leary S.B."/>
            <person name="Osoegawa K."/>
            <person name="Schwartz D.C."/>
            <person name="Shaw-Smith C."/>
            <person name="Stankiewicz P."/>
            <person name="Steward C."/>
            <person name="Swarbreck D."/>
            <person name="Venkataraman V."/>
            <person name="Whittaker C.A."/>
            <person name="Yang X."/>
            <person name="Zimmer A.R."/>
            <person name="Bradley A."/>
            <person name="Hubbard T."/>
            <person name="Birren B.W."/>
            <person name="Rogers J."/>
            <person name="Lander E.S."/>
            <person name="Nusbaum C."/>
        </authorList>
    </citation>
    <scope>NUCLEOTIDE SEQUENCE [LARGE SCALE GENOMIC DNA]</scope>
</reference>
<reference key="2">
    <citation type="journal article" date="2004" name="Genome Res.">
        <title>The status, quality, and expansion of the NIH full-length cDNA project: the Mammalian Gene Collection (MGC).</title>
        <authorList>
            <consortium name="The MGC Project Team"/>
        </authorList>
    </citation>
    <scope>NUCLEOTIDE SEQUENCE [LARGE SCALE MRNA]</scope>
</reference>
<reference key="3">
    <citation type="journal article" date="1994" name="Hum. Mol. Genet.">
        <title>Olfactory receptor gene cluster on human chromosome 17: possible duplication of an ancestral receptor repertoire.</title>
        <authorList>
            <person name="Ben-Arie N."/>
            <person name="Lancet D."/>
            <person name="Taylor C."/>
            <person name="Khen M."/>
            <person name="Walker N."/>
            <person name="Ledbetter D.H."/>
            <person name="Carrozzo R."/>
            <person name="Patel K."/>
            <person name="Sheer D."/>
            <person name="Lehrach H."/>
            <person name="North M.A."/>
        </authorList>
    </citation>
    <scope>NUCLEOTIDE SEQUENCE [GENOMIC DNA] OF 71-286</scope>
    <scope>VARIANTS ALA-193 AND LYS-237</scope>
</reference>
<reference key="4">
    <citation type="journal article" date="2002" name="Genomics">
        <title>DEFOG: a practical scheme for deciphering families of genes.</title>
        <authorList>
            <person name="Fuchs T."/>
            <person name="Malecova B."/>
            <person name="Linhart C."/>
            <person name="Sharan R."/>
            <person name="Khen M."/>
            <person name="Herwig R."/>
            <person name="Shmulevich D."/>
            <person name="Elkon R."/>
            <person name="Steinfath M."/>
            <person name="O'Brien J.K."/>
            <person name="Radelof U."/>
            <person name="Lehrach H."/>
            <person name="Lancet D."/>
            <person name="Shamir R."/>
        </authorList>
    </citation>
    <scope>NUCLEOTIDE SEQUENCE [GENOMIC DNA] OF 71-286</scope>
    <scope>VARIANTS ALA-193 AND LYS-237</scope>
</reference>
<proteinExistence type="uncertain"/>
<name>OR3A4_HUMAN</name>
<organism>
    <name type="scientific">Homo sapiens</name>
    <name type="common">Human</name>
    <dbReference type="NCBI Taxonomy" id="9606"/>
    <lineage>
        <taxon>Eukaryota</taxon>
        <taxon>Metazoa</taxon>
        <taxon>Chordata</taxon>
        <taxon>Craniata</taxon>
        <taxon>Vertebrata</taxon>
        <taxon>Euteleostomi</taxon>
        <taxon>Mammalia</taxon>
        <taxon>Eutheria</taxon>
        <taxon>Euarchontoglires</taxon>
        <taxon>Primates</taxon>
        <taxon>Haplorrhini</taxon>
        <taxon>Catarrhini</taxon>
        <taxon>Hominidae</taxon>
        <taxon>Homo</taxon>
    </lineage>
</organism>